<evidence type="ECO:0000255" key="1">
    <source>
        <dbReference type="HAMAP-Rule" id="MF_00662"/>
    </source>
</evidence>
<organism>
    <name type="scientific">Legionella pneumophila subsp. pneumophila (strain Philadelphia 1 / ATCC 33152 / DSM 7513)</name>
    <dbReference type="NCBI Taxonomy" id="272624"/>
    <lineage>
        <taxon>Bacteria</taxon>
        <taxon>Pseudomonadati</taxon>
        <taxon>Pseudomonadota</taxon>
        <taxon>Gammaproteobacteria</taxon>
        <taxon>Legionellales</taxon>
        <taxon>Legionellaceae</taxon>
        <taxon>Legionella</taxon>
    </lineage>
</organism>
<accession>Q5ZRA9</accession>
<sequence length="283" mass="31959">MFRDVLKTLPQYLIPKHGITALAGYFADVKNPRLKNFLIQNFIRKFDVDMSEALIEDPKSYDCFNDFFIRHLKPECRPLSQSDVICPVDGCISEIGKIERGQLLQAKGKYYSVQELLACDGQLAEQFVQGQFATLYLSPKDYHRVHMPIDAELVSMTYIPGALFSVQPATTRVVPKLFARNERLAIFFKTKIGPMVMVMVGATIVGAIGTSWHGDVKRSKELERFDYSEQFLDKIISQGSEMGYFKLGSTVVLLFANGEKIQWDKELLAGSKIQLGKPMAIIT</sequence>
<reference key="1">
    <citation type="journal article" date="2004" name="Science">
        <title>The genomic sequence of the accidental pathogen Legionella pneumophila.</title>
        <authorList>
            <person name="Chien M."/>
            <person name="Morozova I."/>
            <person name="Shi S."/>
            <person name="Sheng H."/>
            <person name="Chen J."/>
            <person name="Gomez S.M."/>
            <person name="Asamani G."/>
            <person name="Hill K."/>
            <person name="Nuara J."/>
            <person name="Feder M."/>
            <person name="Rineer J."/>
            <person name="Greenberg J.J."/>
            <person name="Steshenko V."/>
            <person name="Park S.H."/>
            <person name="Zhao B."/>
            <person name="Teplitskaya E."/>
            <person name="Edwards J.R."/>
            <person name="Pampou S."/>
            <person name="Georghiou A."/>
            <person name="Chou I.-C."/>
            <person name="Iannuccilli W."/>
            <person name="Ulz M.E."/>
            <person name="Kim D.H."/>
            <person name="Geringer-Sameth A."/>
            <person name="Goldsberry C."/>
            <person name="Morozov P."/>
            <person name="Fischer S.G."/>
            <person name="Segal G."/>
            <person name="Qu X."/>
            <person name="Rzhetsky A."/>
            <person name="Zhang P."/>
            <person name="Cayanis E."/>
            <person name="De Jong P.J."/>
            <person name="Ju J."/>
            <person name="Kalachikov S."/>
            <person name="Shuman H.A."/>
            <person name="Russo J.J."/>
        </authorList>
    </citation>
    <scope>NUCLEOTIDE SEQUENCE [LARGE SCALE GENOMIC DNA]</scope>
    <source>
        <strain>Philadelphia 1 / ATCC 33152 / DSM 7513</strain>
    </source>
</reference>
<comment type="function">
    <text evidence="1">Catalyzes the formation of phosphatidylethanolamine (PtdEtn) from phosphatidylserine (PtdSer).</text>
</comment>
<comment type="catalytic activity">
    <reaction evidence="1">
        <text>a 1,2-diacyl-sn-glycero-3-phospho-L-serine + H(+) = a 1,2-diacyl-sn-glycero-3-phosphoethanolamine + CO2</text>
        <dbReference type="Rhea" id="RHEA:20828"/>
        <dbReference type="ChEBI" id="CHEBI:15378"/>
        <dbReference type="ChEBI" id="CHEBI:16526"/>
        <dbReference type="ChEBI" id="CHEBI:57262"/>
        <dbReference type="ChEBI" id="CHEBI:64612"/>
        <dbReference type="EC" id="4.1.1.65"/>
    </reaction>
</comment>
<comment type="cofactor">
    <cofactor evidence="1">
        <name>pyruvate</name>
        <dbReference type="ChEBI" id="CHEBI:15361"/>
    </cofactor>
    <text evidence="1">Binds 1 pyruvoyl group covalently per subunit.</text>
</comment>
<comment type="pathway">
    <text evidence="1">Phospholipid metabolism; phosphatidylethanolamine biosynthesis; phosphatidylethanolamine from CDP-diacylglycerol: step 2/2.</text>
</comment>
<comment type="subunit">
    <text evidence="1">Heterodimer of a large membrane-associated beta subunit and a small pyruvoyl-containing alpha subunit.</text>
</comment>
<comment type="subcellular location">
    <subcellularLocation>
        <location evidence="1">Cell membrane</location>
        <topology evidence="1">Peripheral membrane protein</topology>
    </subcellularLocation>
</comment>
<comment type="PTM">
    <text evidence="1">Is synthesized initially as an inactive proenzyme. Formation of the active enzyme involves a self-maturation process in which the active site pyruvoyl group is generated from an internal serine residue via an autocatalytic post-translational modification. Two non-identical subunits are generated from the proenzyme in this reaction, and the pyruvate is formed at the N-terminus of the alpha chain, which is derived from the carboxyl end of the proenzyme. The autoendoproteolytic cleavage occurs by a canonical serine protease mechanism, in which the side chain hydroxyl group of the serine supplies its oxygen atom to form the C-terminus of the beta chain, while the remainder of the serine residue undergoes an oxidative deamination to produce ammonia and the pyruvoyl prosthetic group on the alpha chain. During this reaction, the Ser that is part of the protease active site of the proenzyme becomes the pyruvoyl prosthetic group, which constitutes an essential element of the active site of the mature decarboxylase.</text>
</comment>
<comment type="similarity">
    <text evidence="1">Belongs to the phosphatidylserine decarboxylase family. PSD-B subfamily. Prokaryotic type I sub-subfamily.</text>
</comment>
<feature type="chain" id="PRO_0000029673" description="Phosphatidylserine decarboxylase beta chain" evidence="1">
    <location>
        <begin position="1"/>
        <end position="248"/>
    </location>
</feature>
<feature type="chain" id="PRO_0000029674" description="Phosphatidylserine decarboxylase alpha chain" evidence="1">
    <location>
        <begin position="249"/>
        <end position="283"/>
    </location>
</feature>
<feature type="active site" description="Charge relay system; for autoendoproteolytic cleavage activity" evidence="1">
    <location>
        <position position="89"/>
    </location>
</feature>
<feature type="active site" description="Charge relay system; for autoendoproteolytic cleavage activity" evidence="1">
    <location>
        <position position="146"/>
    </location>
</feature>
<feature type="active site" description="Charge relay system; for autoendoproteolytic cleavage activity" evidence="1">
    <location>
        <position position="249"/>
    </location>
</feature>
<feature type="active site" description="Schiff-base intermediate with substrate; via pyruvic acid; for decarboxylase activity" evidence="1">
    <location>
        <position position="249"/>
    </location>
</feature>
<feature type="site" description="Cleavage (non-hydrolytic); by autocatalysis" evidence="1">
    <location>
        <begin position="248"/>
        <end position="249"/>
    </location>
</feature>
<feature type="modified residue" description="Pyruvic acid (Ser); by autocatalysis" evidence="1">
    <location>
        <position position="249"/>
    </location>
</feature>
<proteinExistence type="inferred from homology"/>
<protein>
    <recommendedName>
        <fullName evidence="1">Phosphatidylserine decarboxylase proenzyme</fullName>
        <ecNumber evidence="1">4.1.1.65</ecNumber>
    </recommendedName>
    <component>
        <recommendedName>
            <fullName evidence="1">Phosphatidylserine decarboxylase alpha chain</fullName>
        </recommendedName>
    </component>
    <component>
        <recommendedName>
            <fullName evidence="1">Phosphatidylserine decarboxylase beta chain</fullName>
        </recommendedName>
    </component>
</protein>
<dbReference type="EC" id="4.1.1.65" evidence="1"/>
<dbReference type="EMBL" id="AE017354">
    <property type="protein sequence ID" value="AAU29019.1"/>
    <property type="molecule type" value="Genomic_DNA"/>
</dbReference>
<dbReference type="RefSeq" id="YP_096966.1">
    <property type="nucleotide sequence ID" value="NC_002942.5"/>
</dbReference>
<dbReference type="SMR" id="Q5ZRA9"/>
<dbReference type="STRING" id="272624.lpg2974"/>
<dbReference type="PaxDb" id="272624-lpg2974"/>
<dbReference type="KEGG" id="lpn:lpg2974"/>
<dbReference type="PATRIC" id="fig|272624.6.peg.3178"/>
<dbReference type="eggNOG" id="COG0688">
    <property type="taxonomic scope" value="Bacteria"/>
</dbReference>
<dbReference type="HOGENOM" id="CLU_029061_4_1_6"/>
<dbReference type="OrthoDB" id="9802030at2"/>
<dbReference type="UniPathway" id="UPA00558">
    <property type="reaction ID" value="UER00616"/>
</dbReference>
<dbReference type="Proteomes" id="UP000000609">
    <property type="component" value="Chromosome"/>
</dbReference>
<dbReference type="GO" id="GO:0005886">
    <property type="term" value="C:plasma membrane"/>
    <property type="evidence" value="ECO:0007669"/>
    <property type="project" value="UniProtKB-SubCell"/>
</dbReference>
<dbReference type="GO" id="GO:0004609">
    <property type="term" value="F:phosphatidylserine decarboxylase activity"/>
    <property type="evidence" value="ECO:0007669"/>
    <property type="project" value="UniProtKB-UniRule"/>
</dbReference>
<dbReference type="GO" id="GO:0006646">
    <property type="term" value="P:phosphatidylethanolamine biosynthetic process"/>
    <property type="evidence" value="ECO:0007669"/>
    <property type="project" value="UniProtKB-UniRule"/>
</dbReference>
<dbReference type="HAMAP" id="MF_00662">
    <property type="entry name" value="PS_decarb_PSD_B_type1"/>
    <property type="match status" value="1"/>
</dbReference>
<dbReference type="InterPro" id="IPR003817">
    <property type="entry name" value="PS_Dcarbxylase"/>
</dbReference>
<dbReference type="InterPro" id="IPR033177">
    <property type="entry name" value="PSD-B"/>
</dbReference>
<dbReference type="InterPro" id="IPR033178">
    <property type="entry name" value="PSD_type1_pro"/>
</dbReference>
<dbReference type="NCBIfam" id="TIGR00163">
    <property type="entry name" value="PS_decarb"/>
    <property type="match status" value="1"/>
</dbReference>
<dbReference type="PANTHER" id="PTHR10067">
    <property type="entry name" value="PHOSPHATIDYLSERINE DECARBOXYLASE"/>
    <property type="match status" value="1"/>
</dbReference>
<dbReference type="PANTHER" id="PTHR10067:SF6">
    <property type="entry name" value="PHOSPHATIDYLSERINE DECARBOXYLASE PROENZYME, MITOCHONDRIAL"/>
    <property type="match status" value="1"/>
</dbReference>
<dbReference type="Pfam" id="PF02666">
    <property type="entry name" value="PS_Dcarbxylase"/>
    <property type="match status" value="1"/>
</dbReference>
<keyword id="KW-1003">Cell membrane</keyword>
<keyword id="KW-0210">Decarboxylase</keyword>
<keyword id="KW-0444">Lipid biosynthesis</keyword>
<keyword id="KW-0443">Lipid metabolism</keyword>
<keyword id="KW-0456">Lyase</keyword>
<keyword id="KW-0472">Membrane</keyword>
<keyword id="KW-0594">Phospholipid biosynthesis</keyword>
<keyword id="KW-1208">Phospholipid metabolism</keyword>
<keyword id="KW-0670">Pyruvate</keyword>
<keyword id="KW-1185">Reference proteome</keyword>
<keyword id="KW-0865">Zymogen</keyword>
<gene>
    <name evidence="1" type="primary">psd</name>
    <name type="ordered locus">lpg2974</name>
</gene>
<name>PSD_LEGPH</name>